<proteinExistence type="inferred from homology"/>
<name>RL18_METBF</name>
<keyword id="KW-0687">Ribonucleoprotein</keyword>
<keyword id="KW-0689">Ribosomal protein</keyword>
<keyword id="KW-0694">RNA-binding</keyword>
<keyword id="KW-0699">rRNA-binding</keyword>
<gene>
    <name evidence="1" type="primary">rpl18</name>
    <name type="ordered locus">Mbar_A0091</name>
</gene>
<reference key="1">
    <citation type="journal article" date="2006" name="J. Bacteriol.">
        <title>The Methanosarcina barkeri genome: comparative analysis with Methanosarcina acetivorans and Methanosarcina mazei reveals extensive rearrangement within methanosarcinal genomes.</title>
        <authorList>
            <person name="Maeder D.L."/>
            <person name="Anderson I."/>
            <person name="Brettin T.S."/>
            <person name="Bruce D.C."/>
            <person name="Gilna P."/>
            <person name="Han C.S."/>
            <person name="Lapidus A."/>
            <person name="Metcalf W.W."/>
            <person name="Saunders E."/>
            <person name="Tapia R."/>
            <person name="Sowers K.R."/>
        </authorList>
    </citation>
    <scope>NUCLEOTIDE SEQUENCE [LARGE SCALE GENOMIC DNA]</scope>
    <source>
        <strain>Fusaro / DSM 804</strain>
    </source>
</reference>
<evidence type="ECO:0000255" key="1">
    <source>
        <dbReference type="HAMAP-Rule" id="MF_01337"/>
    </source>
</evidence>
<evidence type="ECO:0000305" key="2"/>
<organism>
    <name type="scientific">Methanosarcina barkeri (strain Fusaro / DSM 804)</name>
    <dbReference type="NCBI Taxonomy" id="269797"/>
    <lineage>
        <taxon>Archaea</taxon>
        <taxon>Methanobacteriati</taxon>
        <taxon>Methanobacteriota</taxon>
        <taxon>Stenosarchaea group</taxon>
        <taxon>Methanomicrobia</taxon>
        <taxon>Methanosarcinales</taxon>
        <taxon>Methanosarcinaceae</taxon>
        <taxon>Methanosarcina</taxon>
    </lineage>
</organism>
<sequence length="174" mass="19241">MATGPRYKVPFRRRREGRTNYHLRLKLLISKQDRVVVRKSARNVQIQLIAPTPEGDITYSSAVSSELAKYGYTGVTGNTTAAYLTGLLFGLKSLKKGYEGGILDIGLQASSAGSRVYAALKGIVDSGFEVPCSPEVFPSDERIRGEHIAEYREESSDLPEQFEATKEKIFAEFS</sequence>
<feature type="chain" id="PRO_0000251396" description="Large ribosomal subunit protein uL18">
    <location>
        <begin position="1"/>
        <end position="174"/>
    </location>
</feature>
<dbReference type="EMBL" id="CP000099">
    <property type="protein sequence ID" value="AAZ69078.1"/>
    <property type="molecule type" value="Genomic_DNA"/>
</dbReference>
<dbReference type="SMR" id="Q46GB4"/>
<dbReference type="STRING" id="269797.Mbar_A0091"/>
<dbReference type="PaxDb" id="269797-Mbar_A0091"/>
<dbReference type="KEGG" id="mba:Mbar_A0091"/>
<dbReference type="eggNOG" id="arCOG04088">
    <property type="taxonomic scope" value="Archaea"/>
</dbReference>
<dbReference type="HOGENOM" id="CLU_056222_2_0_2"/>
<dbReference type="OrthoDB" id="8644at2157"/>
<dbReference type="GO" id="GO:0022625">
    <property type="term" value="C:cytosolic large ribosomal subunit"/>
    <property type="evidence" value="ECO:0007669"/>
    <property type="project" value="TreeGrafter"/>
</dbReference>
<dbReference type="GO" id="GO:0008097">
    <property type="term" value="F:5S rRNA binding"/>
    <property type="evidence" value="ECO:0007669"/>
    <property type="project" value="InterPro"/>
</dbReference>
<dbReference type="GO" id="GO:0003735">
    <property type="term" value="F:structural constituent of ribosome"/>
    <property type="evidence" value="ECO:0007669"/>
    <property type="project" value="InterPro"/>
</dbReference>
<dbReference type="GO" id="GO:0000027">
    <property type="term" value="P:ribosomal large subunit assembly"/>
    <property type="evidence" value="ECO:0007669"/>
    <property type="project" value="TreeGrafter"/>
</dbReference>
<dbReference type="GO" id="GO:0006412">
    <property type="term" value="P:translation"/>
    <property type="evidence" value="ECO:0007669"/>
    <property type="project" value="UniProtKB-UniRule"/>
</dbReference>
<dbReference type="CDD" id="cd00432">
    <property type="entry name" value="Ribosomal_L18_L5e"/>
    <property type="match status" value="1"/>
</dbReference>
<dbReference type="Gene3D" id="3.30.420.100">
    <property type="match status" value="1"/>
</dbReference>
<dbReference type="HAMAP" id="MF_01337_A">
    <property type="entry name" value="Ribosomal_uL18_A"/>
    <property type="match status" value="1"/>
</dbReference>
<dbReference type="InterPro" id="IPR005485">
    <property type="entry name" value="Rbsml_uL18_euk"/>
</dbReference>
<dbReference type="NCBIfam" id="NF006342">
    <property type="entry name" value="PRK08569.1"/>
    <property type="match status" value="1"/>
</dbReference>
<dbReference type="PANTHER" id="PTHR23410:SF12">
    <property type="entry name" value="LARGE RIBOSOMAL SUBUNIT PROTEIN UL18"/>
    <property type="match status" value="1"/>
</dbReference>
<dbReference type="PANTHER" id="PTHR23410">
    <property type="entry name" value="RIBOSOMAL PROTEIN L5-RELATED"/>
    <property type="match status" value="1"/>
</dbReference>
<dbReference type="Pfam" id="PF17144">
    <property type="entry name" value="Ribosomal_L5e"/>
    <property type="match status" value="2"/>
</dbReference>
<dbReference type="SUPFAM" id="SSF53137">
    <property type="entry name" value="Translational machinery components"/>
    <property type="match status" value="1"/>
</dbReference>
<comment type="function">
    <text evidence="1">This is one of the proteins that bind and probably mediate the attachment of the 5S RNA into the large ribosomal subunit, where it forms part of the central protuberance.</text>
</comment>
<comment type="subunit">
    <text evidence="1">Part of the 50S ribosomal subunit. Contacts the 5S and 23S rRNAs.</text>
</comment>
<comment type="similarity">
    <text evidence="1">Belongs to the universal ribosomal protein uL18 family.</text>
</comment>
<protein>
    <recommendedName>
        <fullName evidence="1">Large ribosomal subunit protein uL18</fullName>
    </recommendedName>
    <alternativeName>
        <fullName evidence="2">50S ribosomal protein L18</fullName>
    </alternativeName>
</protein>
<accession>Q46GB4</accession>